<gene>
    <name type="ordered locus">Rv2275</name>
</gene>
<sequence length="289" mass="31612">MSYVAAEPGVLISPTDDLQSPRSAPAAHDENADGITGGTRDDSAPNSRFQLGRRIPEATAQEGFLVRPFTQQCQIIHTEGDHAVIGVSPGNSYFSRQRLRDLGLWGLTNFDRVDFVYTDVHVAESYEALGDSAIEARRKAVKNIRGVRAKITTTVNELDPAGARLCVRPMSEFQSNEAYRELHADLLTRLKDDEDLRAVCQDLVRRFLSTKVGPRQGATATQEQVCMDYICAEAPLFLDTPAILGVPSSLNCYHQSLPLAEMLYARGSGLRASRNQGHAIVTPDGSPAE</sequence>
<keyword id="KW-0002">3D-structure</keyword>
<keyword id="KW-1185">Reference proteome</keyword>
<keyword id="KW-0808">Transferase</keyword>
<name>CDTS_MYCTU</name>
<feature type="chain" id="PRO_0000423356" description="Cyclo(L-tyrosyl-L-tyrosyl) synthase">
    <location>
        <begin position="1"/>
        <end position="289"/>
    </location>
</feature>
<feature type="region of interest" description="Disordered" evidence="2">
    <location>
        <begin position="1"/>
        <end position="48"/>
    </location>
</feature>
<feature type="active site" description="Nucleophile" evidence="6">
    <location>
        <position position="88"/>
    </location>
</feature>
<feature type="binding site" evidence="1">
    <location>
        <position position="91"/>
    </location>
    <ligand>
        <name>substrate</name>
    </ligand>
</feature>
<feature type="binding site" evidence="1">
    <location>
        <begin position="229"/>
        <end position="233"/>
    </location>
    <ligand>
        <name>substrate</name>
    </ligand>
</feature>
<feature type="binding site" evidence="1">
    <location>
        <position position="253"/>
    </location>
    <ligand>
        <name>substrate</name>
    </ligand>
</feature>
<feature type="site" description="Could have a critical role in the catalytic mechanism" evidence="1">
    <location>
        <position position="91"/>
    </location>
</feature>
<feature type="site" description="Could be involved in aa-tRNA binding" evidence="1">
    <location>
        <position position="139"/>
    </location>
</feature>
<feature type="site" description="Could be involved in aa-tRNA binding" evidence="1">
    <location>
        <position position="229"/>
    </location>
</feature>
<feature type="site" description="Could have a critical role in the catalytic mechanism" evidence="1">
    <location>
        <position position="233"/>
    </location>
</feature>
<feature type="mutagenesis site" description="Complete loss of cYY-forming activity." evidence="4">
    <original>S</original>
    <variation>A</variation>
    <location>
        <position position="88"/>
    </location>
</feature>
<feature type="mutagenesis site" description="Small but detectable amount of cYY-forming activity." evidence="4">
    <original>Y</original>
    <variation>F</variation>
    <location>
        <position position="229"/>
    </location>
</feature>
<feature type="mutagenesis site" description="Complete loss of cYY-forming activity." evidence="4">
    <original>E</original>
    <variation>A</variation>
    <location>
        <position position="233"/>
    </location>
</feature>
<feature type="mutagenesis site" description="Complete loss of cYY-forming activity." evidence="4">
    <original>E</original>
    <variation>Q</variation>
    <location>
        <position position="233"/>
    </location>
</feature>
<feature type="mutagenesis site" description="Small but detectable amount of catalytic activity (200-fold decrease)." evidence="4">
    <original>Y</original>
    <variation>F</variation>
    <location>
        <position position="253"/>
    </location>
</feature>
<feature type="strand" evidence="7">
    <location>
        <begin position="52"/>
        <end position="54"/>
    </location>
</feature>
<feature type="strand" evidence="7">
    <location>
        <begin position="59"/>
        <end position="61"/>
    </location>
</feature>
<feature type="strand" evidence="7">
    <location>
        <begin position="64"/>
        <end position="70"/>
    </location>
</feature>
<feature type="helix" evidence="7">
    <location>
        <begin position="71"/>
        <end position="79"/>
    </location>
</feature>
<feature type="strand" evidence="7">
    <location>
        <begin position="82"/>
        <end position="87"/>
    </location>
</feature>
<feature type="helix" evidence="7">
    <location>
        <begin position="96"/>
        <end position="109"/>
    </location>
</feature>
<feature type="strand" evidence="7">
    <location>
        <begin position="111"/>
        <end position="117"/>
    </location>
</feature>
<feature type="helix" evidence="7">
    <location>
        <begin position="122"/>
        <end position="128"/>
    </location>
</feature>
<feature type="helix" evidence="7">
    <location>
        <begin position="133"/>
        <end position="158"/>
    </location>
</feature>
<feature type="strand" evidence="7">
    <location>
        <begin position="163"/>
        <end position="169"/>
    </location>
</feature>
<feature type="helix" evidence="7">
    <location>
        <begin position="170"/>
        <end position="175"/>
    </location>
</feature>
<feature type="helix" evidence="7">
    <location>
        <begin position="177"/>
        <end position="192"/>
    </location>
</feature>
<feature type="helix" evidence="7">
    <location>
        <begin position="194"/>
        <end position="210"/>
    </location>
</feature>
<feature type="helix" evidence="7">
    <location>
        <begin position="220"/>
        <end position="244"/>
    </location>
</feature>
<feature type="strand" evidence="7">
    <location>
        <begin position="249"/>
        <end position="255"/>
    </location>
</feature>
<feature type="helix" evidence="7">
    <location>
        <begin position="260"/>
        <end position="263"/>
    </location>
</feature>
<feature type="strand" evidence="7">
    <location>
        <begin position="266"/>
        <end position="270"/>
    </location>
</feature>
<feature type="strand" evidence="7">
    <location>
        <begin position="276"/>
        <end position="283"/>
    </location>
</feature>
<evidence type="ECO:0000250" key="1"/>
<evidence type="ECO:0000256" key="2">
    <source>
        <dbReference type="SAM" id="MobiDB-lite"/>
    </source>
</evidence>
<evidence type="ECO:0000269" key="3">
    <source>
    </source>
</evidence>
<evidence type="ECO:0000269" key="4">
    <source>
    </source>
</evidence>
<evidence type="ECO:0000305" key="5"/>
<evidence type="ECO:0000305" key="6">
    <source>
    </source>
</evidence>
<evidence type="ECO:0007829" key="7">
    <source>
        <dbReference type="PDB" id="2X9Q"/>
    </source>
</evidence>
<proteinExistence type="evidence at protein level"/>
<protein>
    <recommendedName>
        <fullName>Cyclo(L-tyrosyl-L-tyrosyl) synthase</fullName>
        <ecNumber>2.3.2.21</ecNumber>
    </recommendedName>
    <alternativeName>
        <fullName>Cyclodipeptide synthase</fullName>
        <shortName>CDPS</shortName>
    </alternativeName>
    <alternativeName>
        <fullName>Cyclodityrosine synthase</fullName>
    </alternativeName>
</protein>
<accession>P9WPF9</accession>
<accession>Q50688</accession>
<accession>Q7D7C6</accession>
<reference key="1">
    <citation type="journal article" date="1998" name="Nature">
        <title>Deciphering the biology of Mycobacterium tuberculosis from the complete genome sequence.</title>
        <authorList>
            <person name="Cole S.T."/>
            <person name="Brosch R."/>
            <person name="Parkhill J."/>
            <person name="Garnier T."/>
            <person name="Churcher C.M."/>
            <person name="Harris D.E."/>
            <person name="Gordon S.V."/>
            <person name="Eiglmeier K."/>
            <person name="Gas S."/>
            <person name="Barry C.E. III"/>
            <person name="Tekaia F."/>
            <person name="Badcock K."/>
            <person name="Basham D."/>
            <person name="Brown D."/>
            <person name="Chillingworth T."/>
            <person name="Connor R."/>
            <person name="Davies R.M."/>
            <person name="Devlin K."/>
            <person name="Feltwell T."/>
            <person name="Gentles S."/>
            <person name="Hamlin N."/>
            <person name="Holroyd S."/>
            <person name="Hornsby T."/>
            <person name="Jagels K."/>
            <person name="Krogh A."/>
            <person name="McLean J."/>
            <person name="Moule S."/>
            <person name="Murphy L.D."/>
            <person name="Oliver S."/>
            <person name="Osborne J."/>
            <person name="Quail M.A."/>
            <person name="Rajandream M.A."/>
            <person name="Rogers J."/>
            <person name="Rutter S."/>
            <person name="Seeger K."/>
            <person name="Skelton S."/>
            <person name="Squares S."/>
            <person name="Squares R."/>
            <person name="Sulston J.E."/>
            <person name="Taylor K."/>
            <person name="Whitehead S."/>
            <person name="Barrell B.G."/>
        </authorList>
    </citation>
    <scope>NUCLEOTIDE SEQUENCE [LARGE SCALE GENOMIC DNA]</scope>
    <source>
        <strain>ATCC 25618 / H37Rv</strain>
    </source>
</reference>
<reference key="2">
    <citation type="journal article" date="2009" name="Nat. Chem. Biol.">
        <title>Cyclodipeptide synthases arec a family of tRNA-dependent peptide bond-forming enzymes.</title>
        <authorList>
            <person name="Gondry M."/>
            <person name="Sauguet L."/>
            <person name="Belin P."/>
            <person name="Thai R."/>
            <person name="Amouroux R."/>
            <person name="Tellier C."/>
            <person name="Tuphile K."/>
            <person name="Jacquet M."/>
            <person name="Braud S."/>
            <person name="Courcon M."/>
            <person name="Masson C."/>
            <person name="Dubois S."/>
            <person name="Lautru S."/>
            <person name="Lecoq A."/>
            <person name="Hashimoto S."/>
            <person name="Genet R."/>
            <person name="Pernodet J.L."/>
        </authorList>
    </citation>
    <scope>FUNCTION</scope>
    <scope>CATALYTIC ACTIVITY</scope>
    <scope>SUBSTRATE SPECIFICITY</scope>
</reference>
<reference key="3">
    <citation type="journal article" date="2010" name="Nat. Chem. Biol.">
        <title>The structure and mechanism of the Mycobacterium tuberculosis cyclodityrosine synthetase.</title>
        <authorList>
            <person name="Vetting M.W."/>
            <person name="Hegde S.S."/>
            <person name="Blanchard J.S."/>
        </authorList>
    </citation>
    <scope>X-RAY CRYSTALLOGRAPHY (2.02 ANGSTROMS)</scope>
    <scope>MUTAGENESIS OF SER-88; TYR-229; GLU-233 AND TYR-253</scope>
    <scope>ACTIVE SITE</scope>
    <scope>BIOPHYSICOCHEMICAL PROPERTIES</scope>
    <scope>REACTION MECHANISM</scope>
    <scope>SUBUNIT</scope>
</reference>
<comment type="function">
    <text evidence="3">Involved in the biosynthesis of mycocyclosin. It uses activated amino acids in the form of aminoacyl-tRNAs (aa-tRNAs) as substrates to catalyze the ATP-independent formation of cyclodipeptides which are intermediates in diketopiperazine (DKP) biosynthetic pathways. Catalyzes the formation of cyclo(L-Tyr-L-Tyr) (cYY) from L-tyrosyl-tRNA(Tyr). Can incorporate various nonpolar residues, such as L-phenylalanine, L-leucine, L-tyrosine and L-methionine, and to a much lesser extent L-alanine, into cyclodipeptides. Cyclodipeptides synthesized by Rv2275 always contain L-tyrosine.</text>
</comment>
<comment type="catalytic activity">
    <reaction evidence="3">
        <text>2 L-tyrosyl-tRNA(Tyr) = cyclo(L-tyrosyl-L-tyrosyl) + 2 tRNA(Tyr)</text>
        <dbReference type="Rhea" id="RHEA:46448"/>
        <dbReference type="Rhea" id="RHEA-COMP:9706"/>
        <dbReference type="Rhea" id="RHEA-COMP:9707"/>
        <dbReference type="ChEBI" id="CHEBI:65063"/>
        <dbReference type="ChEBI" id="CHEBI:78442"/>
        <dbReference type="ChEBI" id="CHEBI:78536"/>
        <dbReference type="EC" id="2.3.2.21"/>
    </reaction>
</comment>
<comment type="biophysicochemical properties">
    <kinetics>
        <KM evidence="4">3.6 uM for L-tyrosyl-tRNA(Tyr)</KM>
    </kinetics>
</comment>
<comment type="subunit">
    <text evidence="4">Homodimer.</text>
</comment>
<comment type="miscellaneous">
    <text evidence="6">The reaction proceeds following a ping-pong mechanism forming a covalent intermediate between an active site Ser-88 and the L-phenylalanine residue.</text>
</comment>
<comment type="similarity">
    <text evidence="5">Belongs to the CDPS family.</text>
</comment>
<organism>
    <name type="scientific">Mycobacterium tuberculosis (strain ATCC 25618 / H37Rv)</name>
    <dbReference type="NCBI Taxonomy" id="83332"/>
    <lineage>
        <taxon>Bacteria</taxon>
        <taxon>Bacillati</taxon>
        <taxon>Actinomycetota</taxon>
        <taxon>Actinomycetes</taxon>
        <taxon>Mycobacteriales</taxon>
        <taxon>Mycobacteriaceae</taxon>
        <taxon>Mycobacterium</taxon>
        <taxon>Mycobacterium tuberculosis complex</taxon>
    </lineage>
</organism>
<dbReference type="EC" id="2.3.2.21"/>
<dbReference type="EMBL" id="AL123456">
    <property type="protein sequence ID" value="CCP45057.1"/>
    <property type="molecule type" value="Genomic_DNA"/>
</dbReference>
<dbReference type="PIR" id="G70730">
    <property type="entry name" value="G70730"/>
</dbReference>
<dbReference type="RefSeq" id="NP_216791.1">
    <property type="nucleotide sequence ID" value="NC_000962.3"/>
</dbReference>
<dbReference type="RefSeq" id="WP_003411681.1">
    <property type="nucleotide sequence ID" value="NC_000962.3"/>
</dbReference>
<dbReference type="PDB" id="2X9Q">
    <property type="method" value="X-ray"/>
    <property type="resolution" value="2.02 A"/>
    <property type="chains" value="A/B=1-289"/>
</dbReference>
<dbReference type="PDBsum" id="2X9Q"/>
<dbReference type="SMR" id="P9WPF9"/>
<dbReference type="STRING" id="83332.Rv2275"/>
<dbReference type="PaxDb" id="83332-Rv2275"/>
<dbReference type="DNASU" id="888355"/>
<dbReference type="GeneID" id="888355"/>
<dbReference type="KEGG" id="mtu:Rv2275"/>
<dbReference type="KEGG" id="mtv:RVBD_2275"/>
<dbReference type="TubercuList" id="Rv2275"/>
<dbReference type="eggNOG" id="ENOG5033PIU">
    <property type="taxonomic scope" value="Bacteria"/>
</dbReference>
<dbReference type="InParanoid" id="P9WPF9"/>
<dbReference type="OrthoDB" id="2895472at2"/>
<dbReference type="BioCyc" id="MetaCyc:G185E-6493-MONOMER"/>
<dbReference type="BRENDA" id="2.3.2.21">
    <property type="organism ID" value="3445"/>
</dbReference>
<dbReference type="SABIO-RK" id="P9WPF9"/>
<dbReference type="EvolutionaryTrace" id="P9WPF9"/>
<dbReference type="Proteomes" id="UP000001584">
    <property type="component" value="Chromosome"/>
</dbReference>
<dbReference type="GO" id="GO:0016755">
    <property type="term" value="F:aminoacyltransferase activity"/>
    <property type="evidence" value="ECO:0000314"/>
    <property type="project" value="UniProtKB"/>
</dbReference>
<dbReference type="GO" id="GO:0016875">
    <property type="term" value="F:ligase activity, forming carbon-oxygen bonds"/>
    <property type="evidence" value="ECO:0000314"/>
    <property type="project" value="MTBBASE"/>
</dbReference>
<dbReference type="Gene3D" id="3.40.50.11710">
    <property type="entry name" value="Cyclodipeptide synthase"/>
    <property type="match status" value="1"/>
</dbReference>
<dbReference type="InterPro" id="IPR030903">
    <property type="entry name" value="CDPS"/>
</dbReference>
<dbReference type="InterPro" id="IPR038622">
    <property type="entry name" value="CDPS_sf"/>
</dbReference>
<dbReference type="NCBIfam" id="TIGR04539">
    <property type="entry name" value="tRNA_cyclodipep"/>
    <property type="match status" value="1"/>
</dbReference>
<dbReference type="Pfam" id="PF16715">
    <property type="entry name" value="CDPS"/>
    <property type="match status" value="1"/>
</dbReference>